<evidence type="ECO:0000255" key="1">
    <source>
        <dbReference type="HAMAP-Rule" id="MF_00435"/>
    </source>
</evidence>
<evidence type="ECO:0000255" key="2">
    <source>
        <dbReference type="PROSITE-ProRule" id="PRU01197"/>
    </source>
</evidence>
<evidence type="ECO:0000255" key="3">
    <source>
        <dbReference type="PROSITE-ProRule" id="PRU01198"/>
    </source>
</evidence>
<keyword id="KW-0028">Amino-acid biosynthesis</keyword>
<keyword id="KW-0100">Branched-chain amino acid biosynthesis</keyword>
<keyword id="KW-0460">Magnesium</keyword>
<keyword id="KW-0479">Metal-binding</keyword>
<keyword id="KW-0521">NADP</keyword>
<keyword id="KW-0560">Oxidoreductase</keyword>
<feature type="chain" id="PRO_1000080638" description="Ketol-acid reductoisomerase (NADP(+))">
    <location>
        <begin position="1"/>
        <end position="330"/>
    </location>
</feature>
<feature type="domain" description="KARI N-terminal Rossmann" evidence="2">
    <location>
        <begin position="1"/>
        <end position="181"/>
    </location>
</feature>
<feature type="domain" description="KARI C-terminal knotted" evidence="3">
    <location>
        <begin position="182"/>
        <end position="327"/>
    </location>
</feature>
<feature type="active site" evidence="1">
    <location>
        <position position="107"/>
    </location>
</feature>
<feature type="binding site" evidence="1">
    <location>
        <begin position="24"/>
        <end position="27"/>
    </location>
    <ligand>
        <name>NADP(+)</name>
        <dbReference type="ChEBI" id="CHEBI:58349"/>
    </ligand>
</feature>
<feature type="binding site" evidence="1">
    <location>
        <position position="47"/>
    </location>
    <ligand>
        <name>NADP(+)</name>
        <dbReference type="ChEBI" id="CHEBI:58349"/>
    </ligand>
</feature>
<feature type="binding site" evidence="1">
    <location>
        <position position="50"/>
    </location>
    <ligand>
        <name>NADP(+)</name>
        <dbReference type="ChEBI" id="CHEBI:58349"/>
    </ligand>
</feature>
<feature type="binding site" evidence="1">
    <location>
        <position position="52"/>
    </location>
    <ligand>
        <name>NADP(+)</name>
        <dbReference type="ChEBI" id="CHEBI:58349"/>
    </ligand>
</feature>
<feature type="binding site" evidence="1">
    <location>
        <begin position="82"/>
        <end position="85"/>
    </location>
    <ligand>
        <name>NADP(+)</name>
        <dbReference type="ChEBI" id="CHEBI:58349"/>
    </ligand>
</feature>
<feature type="binding site" evidence="1">
    <location>
        <position position="133"/>
    </location>
    <ligand>
        <name>NADP(+)</name>
        <dbReference type="ChEBI" id="CHEBI:58349"/>
    </ligand>
</feature>
<feature type="binding site" evidence="1">
    <location>
        <position position="190"/>
    </location>
    <ligand>
        <name>Mg(2+)</name>
        <dbReference type="ChEBI" id="CHEBI:18420"/>
        <label>1</label>
    </ligand>
</feature>
<feature type="binding site" evidence="1">
    <location>
        <position position="190"/>
    </location>
    <ligand>
        <name>Mg(2+)</name>
        <dbReference type="ChEBI" id="CHEBI:18420"/>
        <label>2</label>
    </ligand>
</feature>
<feature type="binding site" evidence="1">
    <location>
        <position position="194"/>
    </location>
    <ligand>
        <name>Mg(2+)</name>
        <dbReference type="ChEBI" id="CHEBI:18420"/>
        <label>1</label>
    </ligand>
</feature>
<feature type="binding site" evidence="1">
    <location>
        <position position="226"/>
    </location>
    <ligand>
        <name>Mg(2+)</name>
        <dbReference type="ChEBI" id="CHEBI:18420"/>
        <label>2</label>
    </ligand>
</feature>
<feature type="binding site" evidence="1">
    <location>
        <position position="230"/>
    </location>
    <ligand>
        <name>Mg(2+)</name>
        <dbReference type="ChEBI" id="CHEBI:18420"/>
        <label>2</label>
    </ligand>
</feature>
<feature type="binding site" evidence="1">
    <location>
        <position position="251"/>
    </location>
    <ligand>
        <name>substrate</name>
    </ligand>
</feature>
<organism>
    <name type="scientific">Chlorobium phaeovibrioides (strain DSM 265 / 1930)</name>
    <name type="common">Prosthecochloris vibrioformis (strain DSM 265)</name>
    <dbReference type="NCBI Taxonomy" id="290318"/>
    <lineage>
        <taxon>Bacteria</taxon>
        <taxon>Pseudomonadati</taxon>
        <taxon>Chlorobiota</taxon>
        <taxon>Chlorobiia</taxon>
        <taxon>Chlorobiales</taxon>
        <taxon>Chlorobiaceae</taxon>
        <taxon>Chlorobium/Pelodictyon group</taxon>
        <taxon>Chlorobium</taxon>
    </lineage>
</organism>
<sequence>MNVYYEQDADLGYLQGKNIAVLGYGSQGHAHALNLKESGLNVRVGLRTDSASCQKARAAGLQVDTIADAVKWADVVMVLLPDQYQKAIYDSEIAPNMEPGNTLAFAHGFNIHYKQIVPPDTINVIMIAPKSPGHLVRRTFTEGNGVPCLIAIHHDATGEAKQQALAWAKGLGGAKAGVIETTIKNETETDLFGEQAVLCGGSAELIKAGFETLVEAGYPEELAYFECMHELKLIVDLFYEGGLSRMNYSVSDTAEYGGMTRGPRLITPAVKAEMKKILEEVQDGRFAKEFIDECNGGYKNLNRLRKENSSHPIETVGAKLRNMMSWLIKK</sequence>
<proteinExistence type="inferred from homology"/>
<name>ILVC_CHLPM</name>
<gene>
    <name evidence="1" type="primary">ilvC</name>
    <name type="ordered locus">Cvib_1172</name>
</gene>
<protein>
    <recommendedName>
        <fullName evidence="1">Ketol-acid reductoisomerase (NADP(+))</fullName>
        <shortName evidence="1">KARI</shortName>
        <ecNumber evidence="1">1.1.1.86</ecNumber>
    </recommendedName>
    <alternativeName>
        <fullName evidence="1">Acetohydroxy-acid isomeroreductase</fullName>
        <shortName evidence="1">AHIR</shortName>
    </alternativeName>
    <alternativeName>
        <fullName evidence="1">Alpha-keto-beta-hydroxylacyl reductoisomerase</fullName>
    </alternativeName>
    <alternativeName>
        <fullName evidence="1">Ketol-acid reductoisomerase type 1</fullName>
    </alternativeName>
    <alternativeName>
        <fullName evidence="1">Ketol-acid reductoisomerase type I</fullName>
    </alternativeName>
</protein>
<reference key="1">
    <citation type="submission" date="2007-03" db="EMBL/GenBank/DDBJ databases">
        <title>Complete sequence of Prosthecochloris vibrioformis DSM 265.</title>
        <authorList>
            <consortium name="US DOE Joint Genome Institute"/>
            <person name="Copeland A."/>
            <person name="Lucas S."/>
            <person name="Lapidus A."/>
            <person name="Barry K."/>
            <person name="Detter J.C."/>
            <person name="Glavina del Rio T."/>
            <person name="Hammon N."/>
            <person name="Israni S."/>
            <person name="Pitluck S."/>
            <person name="Schmutz J."/>
            <person name="Larimer F."/>
            <person name="Land M."/>
            <person name="Hauser L."/>
            <person name="Mikhailova N."/>
            <person name="Li T."/>
            <person name="Overmann J."/>
            <person name="Schuster S.C."/>
            <person name="Bryant D.A."/>
            <person name="Richardson P."/>
        </authorList>
    </citation>
    <scope>NUCLEOTIDE SEQUENCE [LARGE SCALE GENOMIC DNA]</scope>
    <source>
        <strain>DSM 265 / 1930</strain>
    </source>
</reference>
<dbReference type="EC" id="1.1.1.86" evidence="1"/>
<dbReference type="EMBL" id="CP000607">
    <property type="protein sequence ID" value="ABP37184.1"/>
    <property type="molecule type" value="Genomic_DNA"/>
</dbReference>
<dbReference type="SMR" id="A4SFC5"/>
<dbReference type="STRING" id="290318.Cvib_1172"/>
<dbReference type="KEGG" id="pvi:Cvib_1172"/>
<dbReference type="eggNOG" id="COG0059">
    <property type="taxonomic scope" value="Bacteria"/>
</dbReference>
<dbReference type="HOGENOM" id="CLU_033821_0_1_10"/>
<dbReference type="OrthoDB" id="9804088at2"/>
<dbReference type="UniPathway" id="UPA00047">
    <property type="reaction ID" value="UER00056"/>
</dbReference>
<dbReference type="UniPathway" id="UPA00049">
    <property type="reaction ID" value="UER00060"/>
</dbReference>
<dbReference type="GO" id="GO:0005829">
    <property type="term" value="C:cytosol"/>
    <property type="evidence" value="ECO:0007669"/>
    <property type="project" value="TreeGrafter"/>
</dbReference>
<dbReference type="GO" id="GO:0004455">
    <property type="term" value="F:ketol-acid reductoisomerase activity"/>
    <property type="evidence" value="ECO:0007669"/>
    <property type="project" value="UniProtKB-UniRule"/>
</dbReference>
<dbReference type="GO" id="GO:0000287">
    <property type="term" value="F:magnesium ion binding"/>
    <property type="evidence" value="ECO:0007669"/>
    <property type="project" value="UniProtKB-UniRule"/>
</dbReference>
<dbReference type="GO" id="GO:0050661">
    <property type="term" value="F:NADP binding"/>
    <property type="evidence" value="ECO:0007669"/>
    <property type="project" value="InterPro"/>
</dbReference>
<dbReference type="GO" id="GO:0009097">
    <property type="term" value="P:isoleucine biosynthetic process"/>
    <property type="evidence" value="ECO:0007669"/>
    <property type="project" value="UniProtKB-UniRule"/>
</dbReference>
<dbReference type="GO" id="GO:0009099">
    <property type="term" value="P:L-valine biosynthetic process"/>
    <property type="evidence" value="ECO:0007669"/>
    <property type="project" value="UniProtKB-UniRule"/>
</dbReference>
<dbReference type="FunFam" id="3.40.50.720:FF:000023">
    <property type="entry name" value="Ketol-acid reductoisomerase (NADP(+))"/>
    <property type="match status" value="1"/>
</dbReference>
<dbReference type="Gene3D" id="6.10.240.10">
    <property type="match status" value="1"/>
</dbReference>
<dbReference type="Gene3D" id="3.40.50.720">
    <property type="entry name" value="NAD(P)-binding Rossmann-like Domain"/>
    <property type="match status" value="1"/>
</dbReference>
<dbReference type="HAMAP" id="MF_00435">
    <property type="entry name" value="IlvC"/>
    <property type="match status" value="1"/>
</dbReference>
<dbReference type="InterPro" id="IPR008927">
    <property type="entry name" value="6-PGluconate_DH-like_C_sf"/>
</dbReference>
<dbReference type="InterPro" id="IPR013023">
    <property type="entry name" value="KARI"/>
</dbReference>
<dbReference type="InterPro" id="IPR000506">
    <property type="entry name" value="KARI_C"/>
</dbReference>
<dbReference type="InterPro" id="IPR013116">
    <property type="entry name" value="KARI_N"/>
</dbReference>
<dbReference type="InterPro" id="IPR014359">
    <property type="entry name" value="KARI_prok"/>
</dbReference>
<dbReference type="InterPro" id="IPR036291">
    <property type="entry name" value="NAD(P)-bd_dom_sf"/>
</dbReference>
<dbReference type="NCBIfam" id="TIGR00465">
    <property type="entry name" value="ilvC"/>
    <property type="match status" value="1"/>
</dbReference>
<dbReference type="NCBIfam" id="NF004017">
    <property type="entry name" value="PRK05479.1"/>
    <property type="match status" value="1"/>
</dbReference>
<dbReference type="NCBIfam" id="NF009940">
    <property type="entry name" value="PRK13403.1"/>
    <property type="match status" value="1"/>
</dbReference>
<dbReference type="PANTHER" id="PTHR21371">
    <property type="entry name" value="KETOL-ACID REDUCTOISOMERASE, MITOCHONDRIAL"/>
    <property type="match status" value="1"/>
</dbReference>
<dbReference type="PANTHER" id="PTHR21371:SF1">
    <property type="entry name" value="KETOL-ACID REDUCTOISOMERASE, MITOCHONDRIAL"/>
    <property type="match status" value="1"/>
</dbReference>
<dbReference type="Pfam" id="PF01450">
    <property type="entry name" value="KARI_C"/>
    <property type="match status" value="1"/>
</dbReference>
<dbReference type="Pfam" id="PF07991">
    <property type="entry name" value="KARI_N"/>
    <property type="match status" value="1"/>
</dbReference>
<dbReference type="PIRSF" id="PIRSF000116">
    <property type="entry name" value="IlvC_gammaproteo"/>
    <property type="match status" value="1"/>
</dbReference>
<dbReference type="SUPFAM" id="SSF48179">
    <property type="entry name" value="6-phosphogluconate dehydrogenase C-terminal domain-like"/>
    <property type="match status" value="1"/>
</dbReference>
<dbReference type="SUPFAM" id="SSF51735">
    <property type="entry name" value="NAD(P)-binding Rossmann-fold domains"/>
    <property type="match status" value="1"/>
</dbReference>
<dbReference type="PROSITE" id="PS51851">
    <property type="entry name" value="KARI_C"/>
    <property type="match status" value="1"/>
</dbReference>
<dbReference type="PROSITE" id="PS51850">
    <property type="entry name" value="KARI_N"/>
    <property type="match status" value="1"/>
</dbReference>
<accession>A4SFC5</accession>
<comment type="function">
    <text evidence="1">Involved in the biosynthesis of branched-chain amino acids (BCAA). Catalyzes an alkyl-migration followed by a ketol-acid reduction of (S)-2-acetolactate (S2AL) to yield (R)-2,3-dihydroxy-isovalerate. In the isomerase reaction, S2AL is rearranged via a Mg-dependent methyl migration to produce 3-hydroxy-3-methyl-2-ketobutyrate (HMKB). In the reductase reaction, this 2-ketoacid undergoes a metal-dependent reduction by NADPH to yield (R)-2,3-dihydroxy-isovalerate.</text>
</comment>
<comment type="catalytic activity">
    <reaction evidence="1">
        <text>(2R)-2,3-dihydroxy-3-methylbutanoate + NADP(+) = (2S)-2-acetolactate + NADPH + H(+)</text>
        <dbReference type="Rhea" id="RHEA:22068"/>
        <dbReference type="ChEBI" id="CHEBI:15378"/>
        <dbReference type="ChEBI" id="CHEBI:49072"/>
        <dbReference type="ChEBI" id="CHEBI:57783"/>
        <dbReference type="ChEBI" id="CHEBI:58349"/>
        <dbReference type="ChEBI" id="CHEBI:58476"/>
        <dbReference type="EC" id="1.1.1.86"/>
    </reaction>
</comment>
<comment type="catalytic activity">
    <reaction evidence="1">
        <text>(2R,3R)-2,3-dihydroxy-3-methylpentanoate + NADP(+) = (S)-2-ethyl-2-hydroxy-3-oxobutanoate + NADPH + H(+)</text>
        <dbReference type="Rhea" id="RHEA:13493"/>
        <dbReference type="ChEBI" id="CHEBI:15378"/>
        <dbReference type="ChEBI" id="CHEBI:49256"/>
        <dbReference type="ChEBI" id="CHEBI:49258"/>
        <dbReference type="ChEBI" id="CHEBI:57783"/>
        <dbReference type="ChEBI" id="CHEBI:58349"/>
        <dbReference type="EC" id="1.1.1.86"/>
    </reaction>
</comment>
<comment type="cofactor">
    <cofactor evidence="1">
        <name>Mg(2+)</name>
        <dbReference type="ChEBI" id="CHEBI:18420"/>
    </cofactor>
    <text evidence="1">Binds 2 magnesium ions per subunit.</text>
</comment>
<comment type="pathway">
    <text evidence="1">Amino-acid biosynthesis; L-isoleucine biosynthesis; L-isoleucine from 2-oxobutanoate: step 2/4.</text>
</comment>
<comment type="pathway">
    <text evidence="1">Amino-acid biosynthesis; L-valine biosynthesis; L-valine from pyruvate: step 2/4.</text>
</comment>
<comment type="similarity">
    <text evidence="1">Belongs to the ketol-acid reductoisomerase family.</text>
</comment>